<proteinExistence type="inferred from homology"/>
<reference key="1">
    <citation type="journal article" date="2008" name="BMC Res. Notes">
        <title>The complete chloroplast genome sequence of Brachypodium distachyon: sequence comparison and phylogenetic analysis of eight grass plastomes.</title>
        <authorList>
            <person name="Bortiri E."/>
            <person name="Coleman-Derr D."/>
            <person name="Lazo G.R."/>
            <person name="Anderson O.D."/>
            <person name="Gu Y.Q."/>
        </authorList>
    </citation>
    <scope>NUCLEOTIDE SEQUENCE [LARGE SCALE GENOMIC DNA]</scope>
    <source>
        <strain>cv. Bd21</strain>
    </source>
</reference>
<organism>
    <name type="scientific">Brachypodium distachyon</name>
    <name type="common">Purple false brome</name>
    <name type="synonym">Trachynia distachya</name>
    <dbReference type="NCBI Taxonomy" id="15368"/>
    <lineage>
        <taxon>Eukaryota</taxon>
        <taxon>Viridiplantae</taxon>
        <taxon>Streptophyta</taxon>
        <taxon>Embryophyta</taxon>
        <taxon>Tracheophyta</taxon>
        <taxon>Spermatophyta</taxon>
        <taxon>Magnoliopsida</taxon>
        <taxon>Liliopsida</taxon>
        <taxon>Poales</taxon>
        <taxon>Poaceae</taxon>
        <taxon>BOP clade</taxon>
        <taxon>Pooideae</taxon>
        <taxon>Stipodae</taxon>
        <taxon>Brachypodieae</taxon>
        <taxon>Brachypodium</taxon>
    </lineage>
</organism>
<keyword id="KW-0150">Chloroplast</keyword>
<keyword id="KW-0249">Electron transport</keyword>
<keyword id="KW-0472">Membrane</keyword>
<keyword id="KW-0602">Photosynthesis</keyword>
<keyword id="KW-0934">Plastid</keyword>
<keyword id="KW-1185">Reference proteome</keyword>
<keyword id="KW-0793">Thylakoid</keyword>
<keyword id="KW-0812">Transmembrane</keyword>
<keyword id="KW-1133">Transmembrane helix</keyword>
<keyword id="KW-0813">Transport</keyword>
<feature type="chain" id="PRO_0000355371" description="Cytochrome b6-f complex subunit 5">
    <location>
        <begin position="1"/>
        <end position="37"/>
    </location>
</feature>
<feature type="transmembrane region" description="Helical" evidence="1">
    <location>
        <begin position="5"/>
        <end position="25"/>
    </location>
</feature>
<protein>
    <recommendedName>
        <fullName evidence="1">Cytochrome b6-f complex subunit 5</fullName>
    </recommendedName>
    <alternativeName>
        <fullName evidence="1">Cytochrome b6-f complex subunit PetG</fullName>
    </alternativeName>
    <alternativeName>
        <fullName evidence="1">Cytochrome b6-f complex subunit V</fullName>
    </alternativeName>
</protein>
<geneLocation type="chloroplast"/>
<name>PETG_BRADI</name>
<comment type="function">
    <text evidence="1">Component of the cytochrome b6-f complex, which mediates electron transfer between photosystem II (PSII) and photosystem I (PSI), cyclic electron flow around PSI, and state transitions. PetG is required for either the stability or assembly of the cytochrome b6-f complex.</text>
</comment>
<comment type="subunit">
    <text evidence="1">The 4 large subunits of the cytochrome b6-f complex are cytochrome b6, subunit IV (17 kDa polypeptide, PetD), cytochrome f and the Rieske protein, while the 4 small subunits are PetG, PetL, PetM and PetN. The complex functions as a dimer.</text>
</comment>
<comment type="subcellular location">
    <subcellularLocation>
        <location evidence="1">Plastid</location>
        <location evidence="1">Chloroplast thylakoid membrane</location>
        <topology evidence="1">Single-pass membrane protein</topology>
    </subcellularLocation>
</comment>
<comment type="similarity">
    <text evidence="1">Belongs to the PetG family.</text>
</comment>
<evidence type="ECO:0000255" key="1">
    <source>
        <dbReference type="HAMAP-Rule" id="MF_00432"/>
    </source>
</evidence>
<sequence>MIEVFLFGIVLGLIPITLAGLFVTAYLQYRRGDQLDL</sequence>
<dbReference type="EMBL" id="EU325680">
    <property type="protein sequence ID" value="ACF08658.1"/>
    <property type="molecule type" value="Genomic_DNA"/>
</dbReference>
<dbReference type="RefSeq" id="YP_002000505.1">
    <property type="nucleotide sequence ID" value="NC_011032.1"/>
</dbReference>
<dbReference type="SMR" id="B3TN69"/>
<dbReference type="FunCoup" id="B3TN69">
    <property type="interactions" value="86"/>
</dbReference>
<dbReference type="STRING" id="15368.B3TN69"/>
<dbReference type="EnsemblPlants" id="KQJ88425">
    <property type="protein sequence ID" value="KQJ88425"/>
    <property type="gene ID" value="BRADI_4g17820v3"/>
</dbReference>
<dbReference type="EnsemblPlants" id="KQK18181">
    <property type="protein sequence ID" value="KQK18181"/>
    <property type="gene ID" value="BRADI_1g39214v3"/>
</dbReference>
<dbReference type="GeneID" id="6439887"/>
<dbReference type="Gramene" id="KQJ88425">
    <property type="protein sequence ID" value="KQJ88425"/>
    <property type="gene ID" value="BRADI_4g17820v3"/>
</dbReference>
<dbReference type="Gramene" id="KQK18181">
    <property type="protein sequence ID" value="KQK18181"/>
    <property type="gene ID" value="BRADI_1g39214v3"/>
</dbReference>
<dbReference type="KEGG" id="bdi:6439887"/>
<dbReference type="InParanoid" id="B3TN69"/>
<dbReference type="OrthoDB" id="35473at2759"/>
<dbReference type="Proteomes" id="UP000008810">
    <property type="component" value="Unplaced"/>
</dbReference>
<dbReference type="ExpressionAtlas" id="B3TN69">
    <property type="expression patterns" value="baseline"/>
</dbReference>
<dbReference type="GO" id="GO:0009535">
    <property type="term" value="C:chloroplast thylakoid membrane"/>
    <property type="evidence" value="ECO:0007669"/>
    <property type="project" value="UniProtKB-SubCell"/>
</dbReference>
<dbReference type="GO" id="GO:0009512">
    <property type="term" value="C:cytochrome b6f complex"/>
    <property type="evidence" value="ECO:0007669"/>
    <property type="project" value="InterPro"/>
</dbReference>
<dbReference type="GO" id="GO:0045158">
    <property type="term" value="F:electron transporter, transferring electrons within cytochrome b6/f complex of photosystem II activity"/>
    <property type="evidence" value="ECO:0007669"/>
    <property type="project" value="UniProtKB-UniRule"/>
</dbReference>
<dbReference type="GO" id="GO:0017004">
    <property type="term" value="P:cytochrome complex assembly"/>
    <property type="evidence" value="ECO:0007669"/>
    <property type="project" value="UniProtKB-UniRule"/>
</dbReference>
<dbReference type="GO" id="GO:0015979">
    <property type="term" value="P:photosynthesis"/>
    <property type="evidence" value="ECO:0007669"/>
    <property type="project" value="UniProtKB-KW"/>
</dbReference>
<dbReference type="HAMAP" id="MF_00432">
    <property type="entry name" value="Cytb6_f_PetG"/>
    <property type="match status" value="1"/>
</dbReference>
<dbReference type="InterPro" id="IPR003683">
    <property type="entry name" value="Cyt_6/f_cplx_su5"/>
</dbReference>
<dbReference type="InterPro" id="IPR036099">
    <property type="entry name" value="Cyt_6/f_cplx_su5_sf"/>
</dbReference>
<dbReference type="NCBIfam" id="NF001907">
    <property type="entry name" value="PRK00665.1"/>
    <property type="match status" value="1"/>
</dbReference>
<dbReference type="Pfam" id="PF02529">
    <property type="entry name" value="PetG"/>
    <property type="match status" value="1"/>
</dbReference>
<dbReference type="PIRSF" id="PIRSF000034">
    <property type="entry name" value="Cyt_b6-f_V"/>
    <property type="match status" value="1"/>
</dbReference>
<dbReference type="SUPFAM" id="SSF103446">
    <property type="entry name" value="PetG subunit of the cytochrome b6f complex"/>
    <property type="match status" value="1"/>
</dbReference>
<gene>
    <name evidence="1" type="primary">petG</name>
</gene>
<accession>B3TN69</accession>